<sequence length="209" mass="22023">MSSGANATTIDVPETRAEAKGKAPLIAAPIVATTKATPHPNAGWKKGLAIFDFLLRLAAIAATLAAATTMGTTDETLPFFTQFFQFQASFDDLPAFMFFVVATAIASGYLALSLPFSLVSIFRPHAQGIRLLLIISDTVMLALTTAGAASATAIVYLAHNGDSSANWIAICQQFTDFCQSVSGAVVASFIAVVIFMLLVMMSALALRKH</sequence>
<gene>
    <name type="ordered locus">VIT_08s0007g02880</name>
    <name type="ORF">GSVIVT00021563001</name>
    <name type="ORF">GSVIVT01033894001</name>
    <name type="ORF">VIT_00033894001</name>
    <name type="ORF">Vv08s0007g02880</name>
</gene>
<protein>
    <recommendedName>
        <fullName>Casparian strip membrane protein 1</fullName>
        <shortName>VvCASP1</shortName>
    </recommendedName>
</protein>
<organism>
    <name type="scientific">Vitis vinifera</name>
    <name type="common">Grape</name>
    <dbReference type="NCBI Taxonomy" id="29760"/>
    <lineage>
        <taxon>Eukaryota</taxon>
        <taxon>Viridiplantae</taxon>
        <taxon>Streptophyta</taxon>
        <taxon>Embryophyta</taxon>
        <taxon>Tracheophyta</taxon>
        <taxon>Spermatophyta</taxon>
        <taxon>Magnoliopsida</taxon>
        <taxon>eudicotyledons</taxon>
        <taxon>Gunneridae</taxon>
        <taxon>Pentapetalae</taxon>
        <taxon>rosids</taxon>
        <taxon>Vitales</taxon>
        <taxon>Vitaceae</taxon>
        <taxon>Viteae</taxon>
        <taxon>Vitis</taxon>
    </lineage>
</organism>
<reference key="1">
    <citation type="journal article" date="2007" name="Nature">
        <title>The grapevine genome sequence suggests ancestral hexaploidization in major angiosperm phyla.</title>
        <authorList>
            <person name="Jaillon O."/>
            <person name="Aury J.-M."/>
            <person name="Noel B."/>
            <person name="Policriti A."/>
            <person name="Clepet C."/>
            <person name="Casagrande A."/>
            <person name="Choisne N."/>
            <person name="Aubourg S."/>
            <person name="Vitulo N."/>
            <person name="Jubin C."/>
            <person name="Vezzi A."/>
            <person name="Legeai F."/>
            <person name="Hugueney P."/>
            <person name="Dasilva C."/>
            <person name="Horner D."/>
            <person name="Mica E."/>
            <person name="Jublot D."/>
            <person name="Poulain J."/>
            <person name="Bruyere C."/>
            <person name="Billault A."/>
            <person name="Segurens B."/>
            <person name="Gouyvenoux M."/>
            <person name="Ugarte E."/>
            <person name="Cattonaro F."/>
            <person name="Anthouard V."/>
            <person name="Vico V."/>
            <person name="Del Fabbro C."/>
            <person name="Alaux M."/>
            <person name="Di Gaspero G."/>
            <person name="Dumas V."/>
            <person name="Felice N."/>
            <person name="Paillard S."/>
            <person name="Juman I."/>
            <person name="Moroldo M."/>
            <person name="Scalabrin S."/>
            <person name="Canaguier A."/>
            <person name="Le Clainche I."/>
            <person name="Malacrida G."/>
            <person name="Durand E."/>
            <person name="Pesole G."/>
            <person name="Laucou V."/>
            <person name="Chatelet P."/>
            <person name="Merdinoglu D."/>
            <person name="Delledonne M."/>
            <person name="Pezzotti M."/>
            <person name="Lecharny A."/>
            <person name="Scarpelli C."/>
            <person name="Artiguenave F."/>
            <person name="Pe M.E."/>
            <person name="Valle G."/>
            <person name="Morgante M."/>
            <person name="Caboche M."/>
            <person name="Adam-Blondon A.-F."/>
            <person name="Weissenbach J."/>
            <person name="Quetier F."/>
            <person name="Wincker P."/>
        </authorList>
    </citation>
    <scope>NUCLEOTIDE SEQUENCE [LARGE SCALE GENOMIC DNA]</scope>
    <source>
        <strain>cv. Pinot noir / PN40024</strain>
    </source>
</reference>
<reference key="2">
    <citation type="journal article" date="2014" name="Plant Physiol.">
        <title>Functional and evolutionary analysis of the CASPARIAN STRIP MEMBRANE DOMAIN PROTEIN family.</title>
        <authorList>
            <person name="Roppolo D."/>
            <person name="Boeckmann B."/>
            <person name="Pfister A."/>
            <person name="Boutet E."/>
            <person name="Rubio M.C."/>
            <person name="Denervaud-Tendon V."/>
            <person name="Vermeer J.E."/>
            <person name="Gheyselinck J."/>
            <person name="Xenarios I."/>
            <person name="Geldner N."/>
        </authorList>
    </citation>
    <scope>GENE FAMILY</scope>
    <scope>NOMENCLATURE</scope>
</reference>
<keyword id="KW-1003">Cell membrane</keyword>
<keyword id="KW-0961">Cell wall biogenesis/degradation</keyword>
<keyword id="KW-0472">Membrane</keyword>
<keyword id="KW-1185">Reference proteome</keyword>
<keyword id="KW-0812">Transmembrane</keyword>
<keyword id="KW-1133">Transmembrane helix</keyword>
<feature type="chain" id="PRO_0000370303" description="Casparian strip membrane protein 1">
    <location>
        <begin position="1"/>
        <end position="209"/>
    </location>
</feature>
<feature type="topological domain" description="Cytoplasmic" evidence="2">
    <location>
        <begin position="1"/>
        <end position="46"/>
    </location>
</feature>
<feature type="transmembrane region" description="Helical" evidence="2">
    <location>
        <begin position="47"/>
        <end position="67"/>
    </location>
</feature>
<feature type="topological domain" description="Extracellular" evidence="2">
    <location>
        <begin position="68"/>
        <end position="95"/>
    </location>
</feature>
<feature type="transmembrane region" description="Helical" evidence="2">
    <location>
        <begin position="96"/>
        <end position="116"/>
    </location>
</feature>
<feature type="topological domain" description="Cytoplasmic" evidence="2">
    <location>
        <begin position="117"/>
        <end position="137"/>
    </location>
</feature>
<feature type="transmembrane region" description="Helical" evidence="2">
    <location>
        <begin position="138"/>
        <end position="158"/>
    </location>
</feature>
<feature type="topological domain" description="Extracellular" evidence="2">
    <location>
        <begin position="159"/>
        <end position="183"/>
    </location>
</feature>
<feature type="transmembrane region" description="Helical" evidence="2">
    <location>
        <begin position="184"/>
        <end position="204"/>
    </location>
</feature>
<feature type="topological domain" description="Cytoplasmic" evidence="2">
    <location>
        <begin position="205"/>
        <end position="209"/>
    </location>
</feature>
<evidence type="ECO:0000250" key="1"/>
<evidence type="ECO:0000255" key="2"/>
<evidence type="ECO:0000305" key="3"/>
<dbReference type="EMBL" id="FN597027">
    <property type="protein sequence ID" value="CBI30337.3"/>
    <property type="molecule type" value="Genomic_DNA"/>
</dbReference>
<dbReference type="RefSeq" id="XP_002276085.1">
    <property type="nucleotide sequence ID" value="XM_002276049.3"/>
</dbReference>
<dbReference type="SMR" id="A7PP95"/>
<dbReference type="FunCoup" id="A7PP95">
    <property type="interactions" value="292"/>
</dbReference>
<dbReference type="PaxDb" id="29760-VIT_08s0007g02880.t01"/>
<dbReference type="EnsemblPlants" id="Vitvi08g01418_t001">
    <property type="protein sequence ID" value="Vitvi08g01418_P001"/>
    <property type="gene ID" value="Vitvi08g01418"/>
</dbReference>
<dbReference type="Gramene" id="Vitvi08g01418_t001">
    <property type="protein sequence ID" value="Vitvi08g01418_P001"/>
    <property type="gene ID" value="Vitvi08g01418"/>
</dbReference>
<dbReference type="eggNOG" id="ENOG502QZV7">
    <property type="taxonomic scope" value="Eukaryota"/>
</dbReference>
<dbReference type="HOGENOM" id="CLU_066104_3_1_1"/>
<dbReference type="InParanoid" id="A7PP95"/>
<dbReference type="OMA" id="TANECRF"/>
<dbReference type="OrthoDB" id="753675at2759"/>
<dbReference type="Proteomes" id="UP000009183">
    <property type="component" value="Chromosome 8"/>
</dbReference>
<dbReference type="GO" id="GO:0048226">
    <property type="term" value="C:Casparian strip"/>
    <property type="evidence" value="ECO:0000318"/>
    <property type="project" value="GO_Central"/>
</dbReference>
<dbReference type="GO" id="GO:0005886">
    <property type="term" value="C:plasma membrane"/>
    <property type="evidence" value="ECO:0000318"/>
    <property type="project" value="GO_Central"/>
</dbReference>
<dbReference type="GO" id="GO:0042545">
    <property type="term" value="P:cell wall modification"/>
    <property type="evidence" value="ECO:0000318"/>
    <property type="project" value="GO_Central"/>
</dbReference>
<dbReference type="GO" id="GO:0007043">
    <property type="term" value="P:cell-cell junction assembly"/>
    <property type="evidence" value="ECO:0000318"/>
    <property type="project" value="GO_Central"/>
</dbReference>
<dbReference type="InterPro" id="IPR006459">
    <property type="entry name" value="CASP/CASPL"/>
</dbReference>
<dbReference type="InterPro" id="IPR006702">
    <property type="entry name" value="CASP_dom"/>
</dbReference>
<dbReference type="InterPro" id="IPR044173">
    <property type="entry name" value="CASPL"/>
</dbReference>
<dbReference type="NCBIfam" id="TIGR01569">
    <property type="entry name" value="A_tha_TIGR01569"/>
    <property type="match status" value="1"/>
</dbReference>
<dbReference type="PANTHER" id="PTHR36488:SF11">
    <property type="entry name" value="CASP-LIKE PROTEIN"/>
    <property type="match status" value="1"/>
</dbReference>
<dbReference type="PANTHER" id="PTHR36488">
    <property type="entry name" value="CASP-LIKE PROTEIN 1U1"/>
    <property type="match status" value="1"/>
</dbReference>
<dbReference type="Pfam" id="PF04535">
    <property type="entry name" value="CASP_dom"/>
    <property type="match status" value="1"/>
</dbReference>
<comment type="function">
    <text evidence="1">Regulates membrane-cell wall junctions and localized cell wall deposition. Required for establishment of the Casparian strip membrane domain (CSD) and the subsequent formation of Casparian strips, a cell wall modification of the root endodermis that determines an apoplastic barrier between the intraorganismal apoplasm and the extraorganismal apoplasm and prevents lateral diffusion (By similarity).</text>
</comment>
<comment type="subunit">
    <text evidence="1">Homodimer and heterodimers.</text>
</comment>
<comment type="subcellular location">
    <subcellularLocation>
        <location evidence="1">Cell membrane</location>
        <topology evidence="1">Multi-pass membrane protein</topology>
    </subcellularLocation>
    <text evidence="1">Very restricted localization following a belt shape within the plasma membrane which coincides with the position of the Casparian strip membrane domain in the root endodermis.</text>
</comment>
<comment type="similarity">
    <text evidence="3">Belongs to the Casparian strip membrane proteins (CASP) family.</text>
</comment>
<proteinExistence type="inferred from homology"/>
<name>CASP1_VITVI</name>
<accession>A7PP95</accession>
<accession>D7TJB1</accession>